<keyword id="KW-0167">Capsid protein</keyword>
<keyword id="KW-1039">Host endosome</keyword>
<keyword id="KW-1043">Host membrane</keyword>
<keyword id="KW-0945">Host-virus interaction</keyword>
<keyword id="KW-0407">Ion channel</keyword>
<keyword id="KW-0406">Ion transport</keyword>
<keyword id="KW-0472">Membrane</keyword>
<keyword id="KW-1143">T=pseudo3 icosahedral capsid protein</keyword>
<keyword id="KW-0813">Transport</keyword>
<keyword id="KW-1161">Viral attachment to host cell</keyword>
<keyword id="KW-1182">Viral ion channel</keyword>
<keyword id="KW-0946">Virion</keyword>
<keyword id="KW-1160">Virus entry into host cell</keyword>
<reference key="1">
    <citation type="journal article" date="1985" name="J. Virol.">
        <title>Molecular cloning and partial sequencing of hepatitis A viral cDNA.</title>
        <authorList>
            <person name="Linemeyer D.L."/>
            <person name="Menke J.G."/>
            <person name="Martin-Gallardo A."/>
            <person name="Hughes J.V."/>
            <person name="Young A."/>
            <person name="Mitra S.W."/>
        </authorList>
    </citation>
    <scope>NUCLEOTIDE SEQUENCE [GENOMIC RNA]</scope>
</reference>
<organismHost>
    <name type="scientific">Cercopithecus hamlyni</name>
    <name type="common">Owl-faced monkey</name>
    <name type="synonym">Hamlyn's monkey</name>
    <dbReference type="NCBI Taxonomy" id="9536"/>
</organismHost>
<organismHost>
    <name type="scientific">Homo sapiens</name>
    <name type="common">Human</name>
    <dbReference type="NCBI Taxonomy" id="9606"/>
</organismHost>
<organismHost>
    <name type="scientific">Macaca</name>
    <name type="common">macaques</name>
    <dbReference type="NCBI Taxonomy" id="9539"/>
</organismHost>
<organismHost>
    <name type="scientific">Pan troglodytes</name>
    <name type="common">Chimpanzee</name>
    <dbReference type="NCBI Taxonomy" id="9598"/>
</organismHost>
<evidence type="ECO:0000250" key="1">
    <source>
        <dbReference type="UniProtKB" id="P03300"/>
    </source>
</evidence>
<evidence type="ECO:0000250" key="2">
    <source>
        <dbReference type="UniProtKB" id="P03303"/>
    </source>
</evidence>
<evidence type="ECO:0000250" key="3">
    <source>
        <dbReference type="UniProtKB" id="P08617"/>
    </source>
</evidence>
<evidence type="ECO:0000255" key="4"/>
<evidence type="ECO:0000305" key="5"/>
<sequence>MNMSKQGIFQTVGSGLDHILSLADIEEEQMIQSVVRTAVTGASYFTSVDQSSVHTAEVGLHQIEPLKTSVDKPSSKKTQGEKFFLIHSADWLTTHALFHEVAKLDVVKLLYNEQFAVQGLLRYHTYARFGIEIQVQINPTPFQQGGLICAMVPSDQSYGSIASLTVYPHGLLNCNINNVVRIKVPFIYTRGAYHFKDPQYPVWELTIRVWSELNIGTGTSAYTSLNVLARFTDLELHGLTPLSTQMMRNEFRVSTTENVVNLSNYEDARAKMSFALDQEDWKSDPSQGGGIKITHFTTWTSIPTLAAQFPFNASDSVGQQIKVIPVDPYFFQMTNTNPDQKCITALASICQMFCFWRGDLVFDFQVFPTKYHSGRLLFCFVPGNELIDVTGITLKQATTAPCAVMDITGVQSTLRFRVPWISDTPYRVNRYTKSAHQKGEYTAIGKLIVYCYNRLTSPSNVASHVRVNVYLSAINLECFAPLYHAMDVTTQVGDDSGGFSTTVSTEQNVPDPQVGITTMKDLKGKANRGKMDVSGVQAPVGAITTIEDPALAKKVPETFPELKPGESRHTSDHMSIYKFMGRSHFLCTFTFNSNNKEYTFPITLSSTSNPPHGLPSTLRWFFNLFQLYRGPLDLTIIITGATDVDGMAWFTPVGLAVDTPWVEKESALSIDYKTALGAVRFNTRRTGNIQIRLPWYSYLYAVSGALDGLGDKTDSTFGLVSIQIANYNHSDEYLSFSCYLSVTQQSEFYFPRAPLNSNAMLSTESMMSRIAAGDLESSVDDPRSEEDRRFESHIECRKPYKELRLEVGKQRLKYAQEELSNEVLPPPRKMKGLFSQAKISLFYTEEHEIMKF</sequence>
<protein>
    <recommendedName>
        <fullName>Genome polyprotein</fullName>
    </recommendedName>
    <component>
        <recommendedName>
            <fullName>Capsid protein VP0</fullName>
        </recommendedName>
        <alternativeName>
            <fullName>VP4-VP2</fullName>
        </alternativeName>
    </component>
    <component>
        <recommendedName>
            <fullName>Capsid protein VP4</fullName>
        </recommendedName>
        <alternativeName>
            <fullName>P1A</fullName>
        </alternativeName>
        <alternativeName>
            <fullName>Virion protein 4</fullName>
        </alternativeName>
    </component>
    <component>
        <recommendedName>
            <fullName>Capsid protein VP2</fullName>
        </recommendedName>
        <alternativeName>
            <fullName>P1B</fullName>
        </alternativeName>
        <alternativeName>
            <fullName>Virion protein 2</fullName>
        </alternativeName>
    </component>
    <component>
        <recommendedName>
            <fullName>Capsid protein VP3</fullName>
        </recommendedName>
        <alternativeName>
            <fullName>P1C</fullName>
        </alternativeName>
        <alternativeName>
            <fullName>Virion protein 3</fullName>
        </alternativeName>
    </component>
    <component>
        <recommendedName>
            <fullName>Protein VP1-2A</fullName>
        </recommendedName>
        <alternativeName>
            <fullName>VPX</fullName>
        </alternativeName>
    </component>
    <component>
        <recommendedName>
            <fullName>Capsid protein VP1</fullName>
        </recommendedName>
        <alternativeName>
            <fullName>P1D</fullName>
        </alternativeName>
        <alternativeName>
            <fullName>Virion protein 1</fullName>
        </alternativeName>
    </component>
    <component>
        <recommendedName>
            <fullName>Assembly signal 2A</fullName>
        </recommendedName>
        <alternativeName>
            <fullName evidence="3">pX</fullName>
        </alternativeName>
    </component>
    <component>
        <recommendedName>
            <fullName>Protein 2BC</fullName>
        </recommendedName>
    </component>
    <component>
        <recommendedName>
            <fullName>Protein 2B</fullName>
            <shortName>P2B</shortName>
        </recommendedName>
    </component>
</protein>
<comment type="function">
    <molecule>Capsid protein VP1</molecule>
    <text evidence="3">Capsid proteins VP1, VP2, and VP3 form a closed capsid enclosing the viral positive strand RNA genome. All these proteins contain a beta-sheet structure called beta-barrel jelly roll. Together they form an icosahedral capsid (T=3) composed of 60 copies of each VP1, VP2, and VP3, with a diameter of approximately 300 Angstroms. VP1 is situated at the 12 fivefold axes, whereas VP2 and VP3 are located at the quasi-sixfold axes. The naked capsid interacts with the host receptor HAVCR1 to provide virion attachment to and probably entry into the target cell.</text>
</comment>
<comment type="function">
    <molecule>Capsid protein VP2</molecule>
    <text evidence="3">Capsid proteins VP1, VP2, and VP3 form a closed capsid enclosing the viral positive strand RNA genome. All these proteins contain a beta-sheet structure called beta-barrel jelly roll. Together they form an icosahedral capsid (T=3) composed of 60 copies of each VP1, VP2, and VP3, with a diameter of approximately 300 Angstroms. VP1 is situated at the 12 fivefold axes, whereas VP2 and VP3 are located at the quasi-sixfold axes. The naked capsid interacts with the host receptor HAVCR1 to provide virion attachment to and probably entry into the target cell.</text>
</comment>
<comment type="function">
    <molecule>Capsid protein VP3</molecule>
    <text evidence="3">Capsid proteins VP1, VP2, and VP3 form a closed capsid enclosing the viral positive strand RNA genome. All these proteins contain a beta-sheet structure called beta-barrel jelly roll. Together they form an icosahedral capsid (T=3) composed of 60 copies of each VP1, VP2, and VP3, with a diameter of approximately 300 Angstroms. VP1 is situated at the 12 fivefold axes, whereas VP2 and VP3 are located at the quasi-sixfold axes. The naked capsid interacts with the host receptor HAVCR1 to provide virion attachment to and probably entry into the target cell.</text>
</comment>
<comment type="function">
    <molecule>Capsid protein VP0</molecule>
    <text evidence="3">VP0 precursor is a component of the immature procapsids.</text>
</comment>
<comment type="function">
    <molecule>Capsid protein VP4</molecule>
    <text evidence="3">Plays a role in the assembly of the 12 pentamers into an icosahedral structure. Has not been detected in mature virions, supposedly owing to its small size.</text>
</comment>
<comment type="function">
    <molecule>Protein VP1-2A</molecule>
    <text evidence="3">Precursor component of immature procapsids that corresponds to an extended form of the structural protein VP1. After maturation, possibly by the host Cathepsin L, the assembly signal 2A is cleaved to give rise to the mature VP1 protein.</text>
</comment>
<comment type="function">
    <molecule>Protein 2BC</molecule>
    <text evidence="3">Affects membrane integrity and causes an increase in membrane permeability.</text>
</comment>
<comment type="function">
    <molecule>Protein 2B</molecule>
    <text evidence="3">Functions as a viroporin. Affects membrane integrity and causes an increase in membrane permeability. Involved in host intracellular membrane rearrangements probably to give rise to the viral factories. Does not disrupt calcium homeostasis or glycoprotein trafficking. Antagonizes the innate immune response of the host by suppressing IFN-beta synthesis, which it achieves by interfering with the RIG-I/IFIH1 pathway.</text>
</comment>
<comment type="subunit">
    <molecule>Protein 2B</molecule>
    <text evidence="3">Homodimer. Homomultimer; probably interacts with membranes in a multimeric form. Seems to assemble into amyloid-like fibers.</text>
</comment>
<comment type="subunit">
    <molecule>Protein VP1-2A</molecule>
    <text evidence="3">Homopentamer. Homooligomer.</text>
</comment>
<comment type="subunit">
    <molecule>Capsid protein VP1</molecule>
    <text evidence="3">Interacts with capsid protein VP2. Interacts with capsid protein VP3.</text>
</comment>
<comment type="subunit">
    <molecule>Capsid protein VP2</molecule>
    <text evidence="3">Interacts with capsid protein VP1. Interacts with capsid protein VP3.</text>
</comment>
<comment type="subunit">
    <molecule>Capsid protein VP3</molecule>
    <text evidence="3">Interacts with capsid protein VP1. Interacts with capsid protein VP2.</text>
</comment>
<comment type="subcellular location">
    <molecule>Capsid protein VP2</molecule>
    <subcellularLocation>
        <location evidence="3">Virion</location>
    </subcellularLocation>
    <subcellularLocation>
        <location evidence="3">Host endosome</location>
        <location evidence="3">Host multivesicular body</location>
    </subcellularLocation>
    <text evidence="3">The egress of newly formed virions occurs through an exosome-like mechanism involving endosomal budding of viral capsids into multivesicular bodies.</text>
</comment>
<comment type="subcellular location">
    <molecule>Capsid protein VP3</molecule>
    <subcellularLocation>
        <location evidence="3">Virion</location>
    </subcellularLocation>
    <subcellularLocation>
        <location evidence="3">Host endosome</location>
        <location evidence="3">Host multivesicular body</location>
    </subcellularLocation>
    <text evidence="3">The egress of newly formed virions occurs through an exosome-like mechanism involving endosomal budding of viral capsids into multivesicular bodies.</text>
</comment>
<comment type="subcellular location">
    <molecule>Capsid protein VP1</molecule>
    <subcellularLocation>
        <location evidence="3">Virion</location>
    </subcellularLocation>
    <subcellularLocation>
        <location evidence="3">Host endosome</location>
        <location evidence="3">Host multivesicular body</location>
    </subcellularLocation>
    <text evidence="3">The egress of newly formed virions occurs through an exosome-like mechanism involving endosomal budding of viral capsids into multivesicular bodies.</text>
</comment>
<comment type="subcellular location">
    <molecule>Capsid protein VP4</molecule>
    <subcellularLocation>
        <location evidence="3">Virion</location>
    </subcellularLocation>
    <text evidence="3">Present in the full mature virion. The egress of newly formed virions occurs through an exosome-like mechanism involving endosomal budding of viral capsids into multivesicular bodies.</text>
</comment>
<comment type="subcellular location">
    <molecule>Protein 2B</molecule>
    <subcellularLocation>
        <location evidence="3">Host membrane</location>
        <topology evidence="3">Peripheral membrane protein</topology>
    </subcellularLocation>
    <text evidence="3">Probably localizes to intracellular membrane vesicles that are induced after virus infection as the site for viral RNA replication.</text>
</comment>
<comment type="domain">
    <molecule>Protein VP1-2A</molecule>
    <text evidence="3">The assembly signal 2A region mediates pentamerization of P1-2A.</text>
</comment>
<comment type="domain">
    <molecule>Genome polyprotein</molecule>
    <text evidence="3">Late-budding domains (L domains) are short sequence motifs essential for viral particle budding. They recruit proteins of the host ESCRT machinery (Endosomal Sorting Complex Required for Transport) or ESCRT-associated proteins. The genome polyprotein contains two L domains: a tandem of (L)YPX(n)L domain which is known to bind the PDCD6IP/ALIX adaptater protein.</text>
</comment>
<comment type="domain">
    <molecule>Capsid protein VP2</molecule>
    <text evidence="3">Late-budding domains (L domains) are short sequence motifs essential for viral particle budding. They recruit proteins of the host ESCRT machinery (Endosomal Sorting Complex Required for Transport) or ESCRT-associated proteins. Capsid protein VP2 contains two L domains: a tandem of (L)YPX(n)L domain which is known to bind the Alix adaptater protein.</text>
</comment>
<comment type="domain">
    <molecule>Protein 2B</molecule>
    <text evidence="3">The C-terminus displays a membrane-penetrating ability.</text>
</comment>
<comment type="PTM">
    <molecule>Genome polyprotein</molecule>
    <text evidence="3">Specific enzymatic cleavages by viral protease in vivo yield a variety of precursors and mature proteins. Polyprotein processing intermediates are produced, such as P1-2A which is a functional precursor of the structural proteins, VP0 which is a VP4-VP2 precursor, VP1-2A precursor, 3ABC precursor which is a stable and catalytically active precursor of 3A, 3B and 3C proteins, 3AB and 3CD precursors. The assembly signal 2A is removed from VP1-2A by a host protease, possibly host Cathepsin L. This cleavage occurs over a region of 3 amino-acids probably generating VP1 proteins with heterogeneous C-termini.</text>
</comment>
<comment type="PTM">
    <molecule>Capsid protein VP0</molecule>
    <text evidence="2">During virion maturation, immature virions are rendered infectious following cleavage of VP0 into VP4 and VP2. This maturation seems to be an autocatalytic event triggered by the presence of RNA in the capsid and is followed by a conformational change of the particle.</text>
</comment>
<comment type="PTM">
    <molecule>Protein VP1-2A</molecule>
    <text evidence="3">The assembly signal 2A is removed from VP1-2A by a host protease, possibly host Cathepsin L in naked virions. This cleavage does not occur in enveloped virions. This cleavage occurs over a region of 3 amino-acids probably generating VP1 proteins with heterogeneous C-termini.</text>
</comment>
<comment type="PTM">
    <text evidence="1">Viral protein genome-linked: VPg is uridylylated prior to priming replication into VPg-pUpU.</text>
</comment>
<comment type="PTM">
    <molecule>Capsid protein VP4</molecule>
    <text evidence="3">Unlike other picornaviruses, does not seem to be myristoylated.</text>
</comment>
<comment type="miscellaneous">
    <molecule>Genome polyprotein</molecule>
    <text evidence="3">The need for an intact eIF4G factor for the initiation of translation of HAV results in an inability to shut off host protein synthesis by a mechanism similar to that of other picornaviruses.</text>
</comment>
<comment type="miscellaneous">
    <molecule>Genome polyprotein</molecule>
    <text evidence="3">During infection, enveloped virions (eHAV) are released from cells. These eHAV are cloaked in host-derived membranes and resemble exosomes. The membrane of eHAV is devoid of viral proteins and thus prevents their neutralization by antibodies. eHAV budding is dependent on ESCRT-associated proteins VPS4B and PDCD6IP/ALIX. eHAV are produced and released in the serum and plasma, but not in bile and feces which only contain the naked, nonenveloped virions. It is likely that eHAV also use HAVCR1 as a functional receptor to infect cells, an evolutionary trait that may enhance HAV infectivity.</text>
</comment>
<comment type="similarity">
    <text evidence="5">Belongs to the picornaviridae polyprotein family.</text>
</comment>
<comment type="caution">
    <text evidence="3">It is uncertain whether Met-1 or Met-3 is the initiator.</text>
</comment>
<feature type="chain" id="PRO_0000310999" description="Genome polyprotein">
    <location>
        <begin position="1"/>
        <end position="852" status="greater than"/>
    </location>
</feature>
<feature type="chain" id="PRO_0000311000" description="Capsid protein VP0">
    <location>
        <begin position="1"/>
        <end position="245"/>
    </location>
</feature>
<feature type="chain" id="PRO_0000039936" description="Capsid protein VP4">
    <location>
        <begin position="1"/>
        <end position="23"/>
    </location>
</feature>
<feature type="chain" id="PRO_0000039937" description="Capsid protein VP2">
    <location>
        <begin position="24"/>
        <end position="245"/>
    </location>
</feature>
<feature type="chain" id="PRO_0000039938" description="Capsid protein VP3">
    <location>
        <begin position="246"/>
        <end position="491"/>
    </location>
</feature>
<feature type="chain" id="PRO_0000311001" description="Protein VP1-2A">
    <location>
        <begin position="492"/>
        <end position="836"/>
    </location>
</feature>
<feature type="chain" id="PRO_0000039939" description="Capsid protein VP1">
    <location>
        <begin position="492"/>
        <end position="765"/>
    </location>
</feature>
<feature type="chain" id="PRO_0000039940" description="Assembly signal 2A">
    <location>
        <begin position="766"/>
        <end position="836"/>
    </location>
</feature>
<feature type="chain" id="PRO_0000311003" description="Protein 2B">
    <location>
        <begin position="837"/>
        <end position="852" status="greater than"/>
    </location>
</feature>
<feature type="chain" id="PRO_0000311002" description="Protein 2BC">
    <location>
        <begin position="837"/>
        <end position="852" status="greater than"/>
    </location>
</feature>
<feature type="region of interest" description="Involved in P1-2A pentamerization" evidence="3">
    <location>
        <begin position="766"/>
        <end position="836"/>
    </location>
</feature>
<feature type="short sequence motif" description="(L)YPX(n)L motif" evidence="3">
    <location>
        <begin position="167"/>
        <end position="171"/>
    </location>
</feature>
<feature type="short sequence motif" description="(L)YPX(n)L motif" evidence="3">
    <location>
        <begin position="200"/>
        <end position="205"/>
    </location>
</feature>
<feature type="site" description="Cleavage" evidence="4">
    <location>
        <begin position="23"/>
        <end position="24"/>
    </location>
</feature>
<feature type="site" description="Cleavage; by protease 3C" evidence="3">
    <location>
        <begin position="245"/>
        <end position="246"/>
    </location>
</feature>
<feature type="site" description="Cleavage; by protease 3C" evidence="3">
    <location>
        <begin position="491"/>
        <end position="492"/>
    </location>
</feature>
<feature type="site" description="Cleavage; partial; by host" evidence="3">
    <location>
        <begin position="765"/>
        <end position="766"/>
    </location>
</feature>
<feature type="site" description="Important for VP1 folding and capsid assembly" evidence="3">
    <location>
        <position position="769"/>
    </location>
</feature>
<feature type="site" description="Cleavage; by protease 3C" evidence="3">
    <location>
        <begin position="836"/>
        <end position="837"/>
    </location>
</feature>
<feature type="non-terminal residue">
    <location>
        <position position="852"/>
    </location>
</feature>
<organism>
    <name type="scientific">Human hepatitis A virus genotype IA (isolate CR326)</name>
    <name type="common">HHAV</name>
    <name type="synonym">Human hepatitis A virus (isolate Human/Costa Rica/CR326/1960)</name>
    <dbReference type="NCBI Taxonomy" id="12097"/>
    <lineage>
        <taxon>Viruses</taxon>
        <taxon>Riboviria</taxon>
        <taxon>Orthornavirae</taxon>
        <taxon>Pisuviricota</taxon>
        <taxon>Pisoniviricetes</taxon>
        <taxon>Picornavirales</taxon>
        <taxon>Picornaviridae</taxon>
        <taxon>Heptrevirinae</taxon>
        <taxon>Hepatovirus</taxon>
        <taxon>Hepatovirus ahepa</taxon>
        <taxon>Hepatovirus A</taxon>
    </lineage>
</organism>
<name>POLG_HAVCR</name>
<dbReference type="EMBL" id="M10033">
    <property type="protein sequence ID" value="AAA45470.1"/>
    <property type="molecule type" value="Genomic_RNA"/>
</dbReference>
<dbReference type="PIR" id="A03904">
    <property type="entry name" value="GNNYHA"/>
</dbReference>
<dbReference type="SMR" id="P06442"/>
<dbReference type="GO" id="GO:0033644">
    <property type="term" value="C:host cell membrane"/>
    <property type="evidence" value="ECO:0007669"/>
    <property type="project" value="UniProtKB-SubCell"/>
</dbReference>
<dbReference type="GO" id="GO:0072494">
    <property type="term" value="C:host multivesicular body"/>
    <property type="evidence" value="ECO:0007669"/>
    <property type="project" value="UniProtKB-SubCell"/>
</dbReference>
<dbReference type="GO" id="GO:0016020">
    <property type="term" value="C:membrane"/>
    <property type="evidence" value="ECO:0007669"/>
    <property type="project" value="UniProtKB-KW"/>
</dbReference>
<dbReference type="GO" id="GO:0039618">
    <property type="term" value="C:T=pseudo3 icosahedral viral capsid"/>
    <property type="evidence" value="ECO:0007669"/>
    <property type="project" value="UniProtKB-KW"/>
</dbReference>
<dbReference type="GO" id="GO:0015267">
    <property type="term" value="F:channel activity"/>
    <property type="evidence" value="ECO:0007669"/>
    <property type="project" value="UniProtKB-KW"/>
</dbReference>
<dbReference type="GO" id="GO:0005198">
    <property type="term" value="F:structural molecule activity"/>
    <property type="evidence" value="ECO:0007669"/>
    <property type="project" value="InterPro"/>
</dbReference>
<dbReference type="GO" id="GO:0034220">
    <property type="term" value="P:monoatomic ion transmembrane transport"/>
    <property type="evidence" value="ECO:0007669"/>
    <property type="project" value="UniProtKB-KW"/>
</dbReference>
<dbReference type="GO" id="GO:0046718">
    <property type="term" value="P:symbiont entry into host cell"/>
    <property type="evidence" value="ECO:0007669"/>
    <property type="project" value="UniProtKB-KW"/>
</dbReference>
<dbReference type="GO" id="GO:0019062">
    <property type="term" value="P:virion attachment to host cell"/>
    <property type="evidence" value="ECO:0007669"/>
    <property type="project" value="UniProtKB-KW"/>
</dbReference>
<dbReference type="CDD" id="cd00205">
    <property type="entry name" value="rhv_like"/>
    <property type="match status" value="2"/>
</dbReference>
<dbReference type="FunFam" id="2.60.120.20:FF:000016">
    <property type="entry name" value="Genome polyprotein"/>
    <property type="match status" value="1"/>
</dbReference>
<dbReference type="FunFam" id="2.60.120.20:FF:000017">
    <property type="entry name" value="Genome polyprotein"/>
    <property type="match status" value="1"/>
</dbReference>
<dbReference type="Gene3D" id="2.60.120.20">
    <property type="match status" value="3"/>
</dbReference>
<dbReference type="InterPro" id="IPR024354">
    <property type="entry name" value="Hepatitis_A_VP1-2A"/>
</dbReference>
<dbReference type="InterPro" id="IPR001676">
    <property type="entry name" value="Picornavirus_capsid"/>
</dbReference>
<dbReference type="InterPro" id="IPR033703">
    <property type="entry name" value="Rhv-like"/>
</dbReference>
<dbReference type="InterPro" id="IPR029053">
    <property type="entry name" value="Viral_coat"/>
</dbReference>
<dbReference type="Pfam" id="PF12944">
    <property type="entry name" value="HAV_VP"/>
    <property type="match status" value="1"/>
</dbReference>
<dbReference type="Pfam" id="PF00073">
    <property type="entry name" value="Rhv"/>
    <property type="match status" value="2"/>
</dbReference>
<dbReference type="SUPFAM" id="SSF88633">
    <property type="entry name" value="Positive stranded ssRNA viruses"/>
    <property type="match status" value="3"/>
</dbReference>
<proteinExistence type="inferred from homology"/>
<accession>P06442</accession>
<accession>Q83741</accession>
<accession>Q83742</accession>